<evidence type="ECO:0000255" key="1">
    <source>
        <dbReference type="HAMAP-Rule" id="MF_00400"/>
    </source>
</evidence>
<sequence>MQKYIVEARSLLALAIPVVIAQLSQTAMGVVDTIMAGSVSATDMAAVAVGTSIWLPAILFGHGLLLALTPTVAQLNGSGRRSQIAHQVRQGFWLALCVSVLIMLVLYNSDHVIKQMDNIDPVLAQKAVGFLHAIMWGVPGYLFFQVLRNQCEGLSKTKPGMVIGFVGLLVNIPINYIFIYGKFGAPALGGVGCGVATASVYWVMFLMMRWYVTRARSQQDIKLEKGFAAPDWQVMKRLSGLGLPVALALFFEVTLFAVVALLVSPLGIVAVAGHQIALNFSSLMFMLPMSLSVAATIRVGFRLGQGSVEQAQVAAYTSMAVGLLLASVTAVFTIVFREHIALLYNKTPEVVTMASHLMLLAALYQLSDAVQVIGSGVLRGYKDTRSIFFITFTAYWLLGLPSGYLLGLTDYILPAMGPAGFWIGFIIGLTAAAILMVLRIRWLQKQPTAFILQRAAH</sequence>
<reference key="1">
    <citation type="journal article" date="2007" name="PLoS Genet.">
        <title>The complete genome sequence of Yersinia pseudotuberculosis IP31758, the causative agent of Far East scarlet-like fever.</title>
        <authorList>
            <person name="Eppinger M."/>
            <person name="Rosovitz M.J."/>
            <person name="Fricke W.F."/>
            <person name="Rasko D.A."/>
            <person name="Kokorina G."/>
            <person name="Fayolle C."/>
            <person name="Lindler L.E."/>
            <person name="Carniel E."/>
            <person name="Ravel J."/>
        </authorList>
    </citation>
    <scope>NUCLEOTIDE SEQUENCE [LARGE SCALE GENOMIC DNA]</scope>
    <source>
        <strain>IP 31758</strain>
    </source>
</reference>
<dbReference type="EMBL" id="CP000720">
    <property type="protein sequence ID" value="ABS48394.1"/>
    <property type="molecule type" value="Genomic_DNA"/>
</dbReference>
<dbReference type="RefSeq" id="WP_012105030.1">
    <property type="nucleotide sequence ID" value="NC_009708.1"/>
</dbReference>
<dbReference type="SMR" id="A7FHJ7"/>
<dbReference type="KEGG" id="ypi:YpsIP31758_1750"/>
<dbReference type="HOGENOM" id="CLU_012893_6_0_6"/>
<dbReference type="Proteomes" id="UP000002412">
    <property type="component" value="Chromosome"/>
</dbReference>
<dbReference type="GO" id="GO:0005886">
    <property type="term" value="C:plasma membrane"/>
    <property type="evidence" value="ECO:0007669"/>
    <property type="project" value="UniProtKB-SubCell"/>
</dbReference>
<dbReference type="GO" id="GO:0015297">
    <property type="term" value="F:antiporter activity"/>
    <property type="evidence" value="ECO:0007669"/>
    <property type="project" value="UniProtKB-UniRule"/>
</dbReference>
<dbReference type="GO" id="GO:0042910">
    <property type="term" value="F:xenobiotic transmembrane transporter activity"/>
    <property type="evidence" value="ECO:0007669"/>
    <property type="project" value="UniProtKB-UniRule"/>
</dbReference>
<dbReference type="GO" id="GO:0006814">
    <property type="term" value="P:sodium ion transport"/>
    <property type="evidence" value="ECO:0007669"/>
    <property type="project" value="UniProtKB-UniRule"/>
</dbReference>
<dbReference type="GO" id="GO:0006855">
    <property type="term" value="P:xenobiotic transmembrane transport"/>
    <property type="evidence" value="ECO:0007669"/>
    <property type="project" value="UniProtKB-UniRule"/>
</dbReference>
<dbReference type="CDD" id="cd13131">
    <property type="entry name" value="MATE_NorM_like"/>
    <property type="match status" value="1"/>
</dbReference>
<dbReference type="HAMAP" id="MF_00400">
    <property type="entry name" value="MdtK"/>
    <property type="match status" value="1"/>
</dbReference>
<dbReference type="InterPro" id="IPR002528">
    <property type="entry name" value="MATE_fam"/>
</dbReference>
<dbReference type="InterPro" id="IPR050222">
    <property type="entry name" value="MATE_MdtK"/>
</dbReference>
<dbReference type="InterPro" id="IPR048279">
    <property type="entry name" value="MdtK-like"/>
</dbReference>
<dbReference type="InterPro" id="IPR022913">
    <property type="entry name" value="Multidrug-R_MdtK"/>
</dbReference>
<dbReference type="NCBIfam" id="TIGR00797">
    <property type="entry name" value="matE"/>
    <property type="match status" value="1"/>
</dbReference>
<dbReference type="PANTHER" id="PTHR43298:SF2">
    <property type="entry name" value="FMN_FAD EXPORTER YEEO-RELATED"/>
    <property type="match status" value="1"/>
</dbReference>
<dbReference type="PANTHER" id="PTHR43298">
    <property type="entry name" value="MULTIDRUG RESISTANCE PROTEIN NORM-RELATED"/>
    <property type="match status" value="1"/>
</dbReference>
<dbReference type="Pfam" id="PF01554">
    <property type="entry name" value="MatE"/>
    <property type="match status" value="2"/>
</dbReference>
<dbReference type="PIRSF" id="PIRSF006603">
    <property type="entry name" value="DinF"/>
    <property type="match status" value="1"/>
</dbReference>
<comment type="function">
    <text evidence="1">Multidrug efflux pump that functions probably as a Na(+)/drug antiporter.</text>
</comment>
<comment type="subcellular location">
    <subcellularLocation>
        <location evidence="1">Cell inner membrane</location>
        <topology evidence="1">Multi-pass membrane protein</topology>
    </subcellularLocation>
</comment>
<comment type="similarity">
    <text evidence="1">Belongs to the multi antimicrobial extrusion (MATE) (TC 2.A.66.1) family. MdtK subfamily.</text>
</comment>
<accession>A7FHJ7</accession>
<keyword id="KW-0050">Antiport</keyword>
<keyword id="KW-0997">Cell inner membrane</keyword>
<keyword id="KW-1003">Cell membrane</keyword>
<keyword id="KW-0406">Ion transport</keyword>
<keyword id="KW-0472">Membrane</keyword>
<keyword id="KW-0915">Sodium</keyword>
<keyword id="KW-0739">Sodium transport</keyword>
<keyword id="KW-0812">Transmembrane</keyword>
<keyword id="KW-1133">Transmembrane helix</keyword>
<keyword id="KW-0813">Transport</keyword>
<gene>
    <name evidence="1" type="primary">mdtK</name>
    <name type="ordered locus">YpsIP31758_1750</name>
</gene>
<protein>
    <recommendedName>
        <fullName evidence="1">Multidrug resistance protein MdtK</fullName>
    </recommendedName>
    <alternativeName>
        <fullName evidence="1">Multidrug-efflux transporter</fullName>
    </alternativeName>
</protein>
<name>MDTK_YERP3</name>
<feature type="chain" id="PRO_1000060798" description="Multidrug resistance protein MdtK">
    <location>
        <begin position="1"/>
        <end position="457"/>
    </location>
</feature>
<feature type="transmembrane region" description="Helical" evidence="1">
    <location>
        <begin position="11"/>
        <end position="31"/>
    </location>
</feature>
<feature type="transmembrane region" description="Helical" evidence="1">
    <location>
        <begin position="46"/>
        <end position="66"/>
    </location>
</feature>
<feature type="transmembrane region" description="Helical" evidence="1">
    <location>
        <begin position="93"/>
        <end position="113"/>
    </location>
</feature>
<feature type="transmembrane region" description="Helical" evidence="1">
    <location>
        <begin position="127"/>
        <end position="147"/>
    </location>
</feature>
<feature type="transmembrane region" description="Helical" evidence="1">
    <location>
        <begin position="160"/>
        <end position="180"/>
    </location>
</feature>
<feature type="transmembrane region" description="Helical" evidence="1">
    <location>
        <begin position="188"/>
        <end position="208"/>
    </location>
</feature>
<feature type="transmembrane region" description="Helical" evidence="1">
    <location>
        <begin position="243"/>
        <end position="263"/>
    </location>
</feature>
<feature type="transmembrane region" description="Helical" evidence="1">
    <location>
        <begin position="283"/>
        <end position="301"/>
    </location>
</feature>
<feature type="transmembrane region" description="Helical" evidence="1">
    <location>
        <begin position="316"/>
        <end position="336"/>
    </location>
</feature>
<feature type="transmembrane region" description="Helical" evidence="1">
    <location>
        <begin position="357"/>
        <end position="377"/>
    </location>
</feature>
<feature type="transmembrane region" description="Helical" evidence="1">
    <location>
        <begin position="387"/>
        <end position="407"/>
    </location>
</feature>
<feature type="transmembrane region" description="Helical" evidence="1">
    <location>
        <begin position="418"/>
        <end position="438"/>
    </location>
</feature>
<organism>
    <name type="scientific">Yersinia pseudotuberculosis serotype O:1b (strain IP 31758)</name>
    <dbReference type="NCBI Taxonomy" id="349747"/>
    <lineage>
        <taxon>Bacteria</taxon>
        <taxon>Pseudomonadati</taxon>
        <taxon>Pseudomonadota</taxon>
        <taxon>Gammaproteobacteria</taxon>
        <taxon>Enterobacterales</taxon>
        <taxon>Yersiniaceae</taxon>
        <taxon>Yersinia</taxon>
    </lineage>
</organism>
<proteinExistence type="inferred from homology"/>